<protein>
    <recommendedName>
        <fullName>Nitrous-oxide reductase</fullName>
        <ecNumber>1.7.2.4</ecNumber>
    </recommendedName>
    <alternativeName>
        <fullName>N(2)OR</fullName>
    </alternativeName>
    <alternativeName>
        <fullName>N2O reductase</fullName>
    </alternativeName>
</protein>
<feature type="signal peptide" description="Tat-type signal" evidence="2">
    <location>
        <begin position="1"/>
        <end position="52"/>
    </location>
</feature>
<feature type="chain" id="PRO_0000019832" description="Nitrous-oxide reductase">
    <location>
        <begin position="53"/>
        <end position="646"/>
    </location>
</feature>
<feature type="region of interest" description="Disordered" evidence="3">
    <location>
        <begin position="1"/>
        <end position="21"/>
    </location>
</feature>
<feature type="region of interest" description="COX2-like">
    <location>
        <begin position="551"/>
        <end position="646"/>
    </location>
</feature>
<feature type="binding site" evidence="1">
    <location>
        <position position="140"/>
    </location>
    <ligand>
        <name>Cu cation</name>
        <dbReference type="ChEBI" id="CHEBI:23378"/>
        <label>Z2</label>
    </ligand>
</feature>
<feature type="binding site" evidence="1">
    <location>
        <position position="141"/>
    </location>
    <ligand>
        <name>Cu cation</name>
        <dbReference type="ChEBI" id="CHEBI:23378"/>
        <label>Z3</label>
    </ligand>
</feature>
<feature type="binding site" evidence="1">
    <location>
        <position position="189"/>
    </location>
    <ligand>
        <name>Cu cation</name>
        <dbReference type="ChEBI" id="CHEBI:23378"/>
        <label>Z2</label>
    </ligand>
</feature>
<feature type="binding site" evidence="1">
    <location>
        <position position="272"/>
    </location>
    <ligand>
        <name>Ca(2+)</name>
        <dbReference type="ChEBI" id="CHEBI:29108"/>
        <label>2</label>
    </ligand>
</feature>
<feature type="binding site" evidence="1">
    <location>
        <position position="275"/>
    </location>
    <ligand>
        <name>Ca(2+)</name>
        <dbReference type="ChEBI" id="CHEBI:29108"/>
        <label>2</label>
    </ligand>
</feature>
<feature type="binding site" evidence="1">
    <location>
        <position position="283"/>
    </location>
    <ligand>
        <name>Ca(2+)</name>
        <dbReference type="ChEBI" id="CHEBI:29108"/>
        <label>2</label>
    </ligand>
</feature>
<feature type="binding site" evidence="1">
    <location>
        <position position="289"/>
    </location>
    <ligand>
        <name>Ca(2+)</name>
        <dbReference type="ChEBI" id="CHEBI:29108"/>
        <label>2</label>
    </ligand>
</feature>
<feature type="binding site" evidence="1">
    <location>
        <position position="342"/>
    </location>
    <ligand>
        <name>Ca(2+)</name>
        <dbReference type="ChEBI" id="CHEBI:29108"/>
        <label>2</label>
    </ligand>
</feature>
<feature type="binding site" evidence="1">
    <location>
        <position position="344"/>
    </location>
    <ligand>
        <name>Cu cation</name>
        <dbReference type="ChEBI" id="CHEBI:23378"/>
        <label>Z1</label>
    </ligand>
</feature>
<feature type="binding site" evidence="1">
    <location>
        <position position="400"/>
    </location>
    <ligand>
        <name>Cu cation</name>
        <dbReference type="ChEBI" id="CHEBI:23378"/>
        <label>Z1</label>
    </ligand>
</feature>
<feature type="binding site" evidence="1">
    <location>
        <position position="452"/>
    </location>
    <ligand>
        <name>Cu cation</name>
        <dbReference type="ChEBI" id="CHEBI:23378"/>
        <label>Z3</label>
    </ligand>
</feature>
<feature type="binding site" evidence="1">
    <location>
        <position position="473"/>
    </location>
    <ligand>
        <name>Ca(2+)</name>
        <dbReference type="ChEBI" id="CHEBI:29108"/>
        <label>1</label>
    </ligand>
</feature>
<feature type="binding site" evidence="1">
    <location>
        <position position="488"/>
    </location>
    <ligand>
        <name>Ca(2+)</name>
        <dbReference type="ChEBI" id="CHEBI:29108"/>
        <label>1</label>
    </ligand>
</feature>
<feature type="binding site" evidence="1">
    <location>
        <position position="513"/>
    </location>
    <ligand>
        <name>Cu cation</name>
        <dbReference type="ChEBI" id="CHEBI:23378"/>
        <label>Z4</label>
    </ligand>
</feature>
<feature type="binding site" evidence="1">
    <location>
        <position position="592"/>
    </location>
    <ligand>
        <name>Cu cation</name>
        <dbReference type="ChEBI" id="CHEBI:23378"/>
        <label>A1</label>
    </ligand>
</feature>
<feature type="binding site" evidence="1">
    <location>
        <position position="627"/>
    </location>
    <ligand>
        <name>Cu cation</name>
        <dbReference type="ChEBI" id="CHEBI:23378"/>
        <label>A1</label>
    </ligand>
</feature>
<feature type="binding site" evidence="1">
    <location>
        <position position="627"/>
    </location>
    <ligand>
        <name>Cu cation</name>
        <dbReference type="ChEBI" id="CHEBI:23378"/>
        <label>A2</label>
    </ligand>
</feature>
<feature type="binding site" evidence="1">
    <location>
        <position position="629"/>
    </location>
    <ligand>
        <name>Cu cation</name>
        <dbReference type="ChEBI" id="CHEBI:23378"/>
        <label>A2</label>
    </ligand>
</feature>
<feature type="binding site" evidence="1">
    <location>
        <position position="631"/>
    </location>
    <ligand>
        <name>Cu cation</name>
        <dbReference type="ChEBI" id="CHEBI:23378"/>
        <label>A1</label>
    </ligand>
</feature>
<feature type="binding site" evidence="1">
    <location>
        <position position="631"/>
    </location>
    <ligand>
        <name>Cu cation</name>
        <dbReference type="ChEBI" id="CHEBI:23378"/>
        <label>A2</label>
    </ligand>
</feature>
<feature type="binding site" evidence="1">
    <location>
        <position position="635"/>
    </location>
    <ligand>
        <name>Cu cation</name>
        <dbReference type="ChEBI" id="CHEBI:23378"/>
        <label>A2</label>
    </ligand>
</feature>
<feature type="binding site" evidence="1">
    <location>
        <position position="638"/>
    </location>
    <ligand>
        <name>Cu cation</name>
        <dbReference type="ChEBI" id="CHEBI:23378"/>
        <label>A1</label>
    </ligand>
</feature>
<geneLocation type="plasmid">
    <name>megaplasmid Rsp</name>
</geneLocation>
<gene>
    <name type="primary">nosZ</name>
    <name type="ordered locus">RSp1368</name>
    <name type="ORF">RS02090</name>
</gene>
<name>NOSZ_RALN1</name>
<dbReference type="EC" id="1.7.2.4"/>
<dbReference type="EMBL" id="AL646053">
    <property type="protein sequence ID" value="CAD18519.1"/>
    <property type="molecule type" value="Genomic_DNA"/>
</dbReference>
<dbReference type="RefSeq" id="WP_011004618.1">
    <property type="nucleotide sequence ID" value="NC_003296.1"/>
</dbReference>
<dbReference type="SMR" id="Q8XQB8"/>
<dbReference type="STRING" id="267608.RSp1368"/>
<dbReference type="EnsemblBacteria" id="CAD18519">
    <property type="protein sequence ID" value="CAD18519"/>
    <property type="gene ID" value="RSp1368"/>
</dbReference>
<dbReference type="KEGG" id="rso:RSp1368"/>
<dbReference type="PATRIC" id="fig|267608.8.peg.4846"/>
<dbReference type="eggNOG" id="COG4263">
    <property type="taxonomic scope" value="Bacteria"/>
</dbReference>
<dbReference type="HOGENOM" id="CLU_016420_0_0_4"/>
<dbReference type="UniPathway" id="UPA00652">
    <property type="reaction ID" value="UER00709"/>
</dbReference>
<dbReference type="Proteomes" id="UP000001436">
    <property type="component" value="Plasmid megaplasmid Rsp"/>
</dbReference>
<dbReference type="GO" id="GO:0016020">
    <property type="term" value="C:membrane"/>
    <property type="evidence" value="ECO:0007669"/>
    <property type="project" value="InterPro"/>
</dbReference>
<dbReference type="GO" id="GO:0042597">
    <property type="term" value="C:periplasmic space"/>
    <property type="evidence" value="ECO:0007669"/>
    <property type="project" value="UniProtKB-SubCell"/>
</dbReference>
<dbReference type="GO" id="GO:0005509">
    <property type="term" value="F:calcium ion binding"/>
    <property type="evidence" value="ECO:0007669"/>
    <property type="project" value="UniProtKB-UniRule"/>
</dbReference>
<dbReference type="GO" id="GO:0005507">
    <property type="term" value="F:copper ion binding"/>
    <property type="evidence" value="ECO:0007669"/>
    <property type="project" value="UniProtKB-UniRule"/>
</dbReference>
<dbReference type="GO" id="GO:0004129">
    <property type="term" value="F:cytochrome-c oxidase activity"/>
    <property type="evidence" value="ECO:0007669"/>
    <property type="project" value="InterPro"/>
</dbReference>
<dbReference type="GO" id="GO:0050304">
    <property type="term" value="F:nitrous-oxide reductase activity"/>
    <property type="evidence" value="ECO:0007669"/>
    <property type="project" value="UniProtKB-UniRule"/>
</dbReference>
<dbReference type="GO" id="GO:0019333">
    <property type="term" value="P:denitrification pathway"/>
    <property type="evidence" value="ECO:0007669"/>
    <property type="project" value="UniProtKB-UniPathway"/>
</dbReference>
<dbReference type="CDD" id="cd04223">
    <property type="entry name" value="N2OR_C"/>
    <property type="match status" value="1"/>
</dbReference>
<dbReference type="Gene3D" id="2.60.40.420">
    <property type="entry name" value="Cupredoxins - blue copper proteins"/>
    <property type="match status" value="1"/>
</dbReference>
<dbReference type="Gene3D" id="2.130.10.10">
    <property type="entry name" value="YVTN repeat-like/Quinoprotein amine dehydrogenase"/>
    <property type="match status" value="1"/>
</dbReference>
<dbReference type="HAMAP" id="MF_00716">
    <property type="entry name" value="NosZ"/>
    <property type="match status" value="1"/>
</dbReference>
<dbReference type="InterPro" id="IPR002429">
    <property type="entry name" value="CcO_II-like_C"/>
</dbReference>
<dbReference type="InterPro" id="IPR008972">
    <property type="entry name" value="Cupredoxin"/>
</dbReference>
<dbReference type="InterPro" id="IPR028096">
    <property type="entry name" value="EfeO_Cupredoxin"/>
</dbReference>
<dbReference type="InterPro" id="IPR011045">
    <property type="entry name" value="N2O_reductase_N"/>
</dbReference>
<dbReference type="InterPro" id="IPR034205">
    <property type="entry name" value="N2OR_C"/>
</dbReference>
<dbReference type="InterPro" id="IPR023644">
    <property type="entry name" value="NO_Rdtase"/>
</dbReference>
<dbReference type="InterPro" id="IPR041114">
    <property type="entry name" value="Nos_propeller"/>
</dbReference>
<dbReference type="InterPro" id="IPR041142">
    <property type="entry name" value="NOS_propeller_2"/>
</dbReference>
<dbReference type="InterPro" id="IPR051403">
    <property type="entry name" value="NosZ/Cyto_c_oxidase_sub2"/>
</dbReference>
<dbReference type="InterPro" id="IPR006311">
    <property type="entry name" value="TAT_signal"/>
</dbReference>
<dbReference type="InterPro" id="IPR015943">
    <property type="entry name" value="WD40/YVTN_repeat-like_dom_sf"/>
</dbReference>
<dbReference type="NCBIfam" id="TIGR04244">
    <property type="entry name" value="nitrous_NosZ_RR"/>
    <property type="match status" value="1"/>
</dbReference>
<dbReference type="PANTHER" id="PTHR42838">
    <property type="entry name" value="CYTOCHROME C OXIDASE SUBUNIT II"/>
    <property type="match status" value="1"/>
</dbReference>
<dbReference type="PANTHER" id="PTHR42838:SF2">
    <property type="entry name" value="NITROUS-OXIDE REDUCTASE"/>
    <property type="match status" value="1"/>
</dbReference>
<dbReference type="Pfam" id="PF13473">
    <property type="entry name" value="Cupredoxin_1"/>
    <property type="match status" value="1"/>
</dbReference>
<dbReference type="Pfam" id="PF18764">
    <property type="entry name" value="nos_propeller"/>
    <property type="match status" value="1"/>
</dbReference>
<dbReference type="Pfam" id="PF18793">
    <property type="entry name" value="nos_propeller_2"/>
    <property type="match status" value="1"/>
</dbReference>
<dbReference type="SUPFAM" id="SSF49503">
    <property type="entry name" value="Cupredoxins"/>
    <property type="match status" value="1"/>
</dbReference>
<dbReference type="SUPFAM" id="SSF50974">
    <property type="entry name" value="Nitrous oxide reductase, N-terminal domain"/>
    <property type="match status" value="1"/>
</dbReference>
<dbReference type="PROSITE" id="PS50857">
    <property type="entry name" value="COX2_CUA"/>
    <property type="match status" value="1"/>
</dbReference>
<dbReference type="PROSITE" id="PS51318">
    <property type="entry name" value="TAT"/>
    <property type="match status" value="1"/>
</dbReference>
<evidence type="ECO:0000250" key="1"/>
<evidence type="ECO:0000255" key="2"/>
<evidence type="ECO:0000256" key="3">
    <source>
        <dbReference type="SAM" id="MobiDB-lite"/>
    </source>
</evidence>
<evidence type="ECO:0000305" key="4"/>
<proteinExistence type="inferred from homology"/>
<organism>
    <name type="scientific">Ralstonia nicotianae (strain ATCC BAA-1114 / GMI1000)</name>
    <name type="common">Ralstonia solanacearum</name>
    <dbReference type="NCBI Taxonomy" id="267608"/>
    <lineage>
        <taxon>Bacteria</taxon>
        <taxon>Pseudomonadati</taxon>
        <taxon>Pseudomonadota</taxon>
        <taxon>Betaproteobacteria</taxon>
        <taxon>Burkholderiales</taxon>
        <taxon>Burkholderiaceae</taxon>
        <taxon>Ralstonia</taxon>
        <taxon>Ralstonia solanacearum species complex</taxon>
    </lineage>
</organism>
<comment type="function">
    <text evidence="1">Nitrous-oxide reductase is part of a bacterial respiratory system which is activated under anaerobic conditions in the presence of nitrate or nitrous oxide.</text>
</comment>
<comment type="catalytic activity">
    <reaction>
        <text>N2 + 2 Fe(III)-[cytochrome c] + H2O = nitrous oxide + 2 Fe(II)-[cytochrome c] + 2 H(+)</text>
        <dbReference type="Rhea" id="RHEA:43108"/>
        <dbReference type="Rhea" id="RHEA-COMP:10350"/>
        <dbReference type="Rhea" id="RHEA-COMP:14399"/>
        <dbReference type="ChEBI" id="CHEBI:15377"/>
        <dbReference type="ChEBI" id="CHEBI:15378"/>
        <dbReference type="ChEBI" id="CHEBI:17045"/>
        <dbReference type="ChEBI" id="CHEBI:17997"/>
        <dbReference type="ChEBI" id="CHEBI:29033"/>
        <dbReference type="ChEBI" id="CHEBI:29034"/>
        <dbReference type="EC" id="1.7.2.4"/>
    </reaction>
</comment>
<comment type="cofactor">
    <cofactor evidence="1">
        <name>Ca(2+)</name>
        <dbReference type="ChEBI" id="CHEBI:29108"/>
    </cofactor>
    <text evidence="1">Binds 2 calcium ions per subunit.</text>
</comment>
<comment type="cofactor">
    <cofactor evidence="1">
        <name>Cu cation</name>
        <dbReference type="ChEBI" id="CHEBI:23378"/>
    </cofactor>
    <text evidence="1">Binds 6 Cu cations per subunit. Each subunit contains 2 copper centers; Cu(A) (binuclear) and Cu(Z) (tetranuclear). Cu(Z) is thought to be the site of nitrous oxide reduction.</text>
</comment>
<comment type="pathway">
    <text>Nitrogen metabolism; nitrate reduction (denitrification); dinitrogen from nitrate: step 4/4.</text>
</comment>
<comment type="subunit">
    <text evidence="1">Homodimer.</text>
</comment>
<comment type="subcellular location">
    <subcellularLocation>
        <location evidence="1">Periplasm</location>
    </subcellularLocation>
</comment>
<comment type="PTM">
    <text>Predicted to be exported by the Tat system. The position of the signal peptide cleavage has not been experimentally proven.</text>
</comment>
<comment type="similarity">
    <text evidence="4">Belongs to the NosZ family.</text>
</comment>
<comment type="similarity">
    <text evidence="4">In the C-terminal section; belongs to the cytochrome c oxidase subunit 2 family.</text>
</comment>
<accession>Q8XQB8</accession>
<keyword id="KW-0106">Calcium</keyword>
<keyword id="KW-0186">Copper</keyword>
<keyword id="KW-0479">Metal-binding</keyword>
<keyword id="KW-0560">Oxidoreductase</keyword>
<keyword id="KW-0574">Periplasm</keyword>
<keyword id="KW-0614">Plasmid</keyword>
<keyword id="KW-1185">Reference proteome</keyword>
<keyword id="KW-0732">Signal</keyword>
<reference key="1">
    <citation type="journal article" date="2002" name="Nature">
        <title>Genome sequence of the plant pathogen Ralstonia solanacearum.</title>
        <authorList>
            <person name="Salanoubat M."/>
            <person name="Genin S."/>
            <person name="Artiguenave F."/>
            <person name="Gouzy J."/>
            <person name="Mangenot S."/>
            <person name="Arlat M."/>
            <person name="Billault A."/>
            <person name="Brottier P."/>
            <person name="Camus J.-C."/>
            <person name="Cattolico L."/>
            <person name="Chandler M."/>
            <person name="Choisne N."/>
            <person name="Claudel-Renard C."/>
            <person name="Cunnac S."/>
            <person name="Demange N."/>
            <person name="Gaspin C."/>
            <person name="Lavie M."/>
            <person name="Moisan A."/>
            <person name="Robert C."/>
            <person name="Saurin W."/>
            <person name="Schiex T."/>
            <person name="Siguier P."/>
            <person name="Thebault P."/>
            <person name="Whalen M."/>
            <person name="Wincker P."/>
            <person name="Levy M."/>
            <person name="Weissenbach J."/>
            <person name="Boucher C.A."/>
        </authorList>
    </citation>
    <scope>NUCLEOTIDE SEQUENCE [LARGE SCALE GENOMIC DNA]</scope>
    <source>
        <strain>ATCC BAA-1114 / GMI1000</strain>
    </source>
</reference>
<sequence>MMSKHPHSPSTPQDETPSVPGRRRFMNSAALAGLATVVACTDKGAPAGSAAATGVAATAEEHTVAGLHPKPGQLDTYYGLWSGGHTGDMRVMGMPSGREIHRIPMFVPDALVGWGITNESKKVMGTRPDGRLKYTVGDTHHVHASYKDGNYDGRYAWINDKINSRLGRVRLDYFICDKITELPNVQGFHGIFPDKRDPVDPQINYTTRVFCGGEFAIPLPNTAGIDDPAKYRSLFTCVDAESMEVRWQVLIDGNCDLVATSYDGKLAATNQYNTEMGAHYEDMMSAERDACLFFNVARIEAAVKAGRFKTIGDSKVPVVDGTHAANQDPKTALTAYVSVPKNPHGVNASPDQKYFICAGKLSPTATVIELARVLDWFDGKLAKIDDAIVAEVELGLGPLHTAFDGRGNAYTTLFLDSQIVKWNIDAAIRFHKGDKNAKYVVDRLDVHYQPGHLNASQSETVAADGKFLAVGCKFSKDRFLPVGPLHPENEQFIDISGDKMVLLQDHPIRSEPHDFIIFKRELLHPKQIYSLDDFPLATKDPKQSGVVRNGKKVTVRLTSQAPSYSLREFKLKKGDEVTLILTNLDKVEDLTHGFAIPKYDINFIVNPQETASVTFIADKPGVFWCYCTHFCHALHLEMRSRMIVEA</sequence>